<dbReference type="EC" id="3.6.4.-" evidence="1"/>
<dbReference type="EMBL" id="CP000446">
    <property type="protein sequence ID" value="ABI38976.1"/>
    <property type="molecule type" value="Genomic_DNA"/>
</dbReference>
<dbReference type="RefSeq" id="WP_011622673.1">
    <property type="nucleotide sequence ID" value="NC_008321.1"/>
</dbReference>
<dbReference type="SMR" id="Q0HIZ1"/>
<dbReference type="KEGG" id="she:Shewmr4_1902"/>
<dbReference type="HOGENOM" id="CLU_055599_1_0_6"/>
<dbReference type="GO" id="GO:0005737">
    <property type="term" value="C:cytoplasm"/>
    <property type="evidence" value="ECO:0007669"/>
    <property type="project" value="UniProtKB-SubCell"/>
</dbReference>
<dbReference type="GO" id="GO:0048476">
    <property type="term" value="C:Holliday junction resolvase complex"/>
    <property type="evidence" value="ECO:0007669"/>
    <property type="project" value="UniProtKB-UniRule"/>
</dbReference>
<dbReference type="GO" id="GO:0005524">
    <property type="term" value="F:ATP binding"/>
    <property type="evidence" value="ECO:0007669"/>
    <property type="project" value="UniProtKB-UniRule"/>
</dbReference>
<dbReference type="GO" id="GO:0016887">
    <property type="term" value="F:ATP hydrolysis activity"/>
    <property type="evidence" value="ECO:0007669"/>
    <property type="project" value="InterPro"/>
</dbReference>
<dbReference type="GO" id="GO:0000400">
    <property type="term" value="F:four-way junction DNA binding"/>
    <property type="evidence" value="ECO:0007669"/>
    <property type="project" value="UniProtKB-UniRule"/>
</dbReference>
<dbReference type="GO" id="GO:0009378">
    <property type="term" value="F:four-way junction helicase activity"/>
    <property type="evidence" value="ECO:0007669"/>
    <property type="project" value="InterPro"/>
</dbReference>
<dbReference type="GO" id="GO:0006310">
    <property type="term" value="P:DNA recombination"/>
    <property type="evidence" value="ECO:0007669"/>
    <property type="project" value="UniProtKB-UniRule"/>
</dbReference>
<dbReference type="GO" id="GO:0006281">
    <property type="term" value="P:DNA repair"/>
    <property type="evidence" value="ECO:0007669"/>
    <property type="project" value="UniProtKB-UniRule"/>
</dbReference>
<dbReference type="CDD" id="cd00009">
    <property type="entry name" value="AAA"/>
    <property type="match status" value="1"/>
</dbReference>
<dbReference type="FunFam" id="1.10.10.10:FF:000086">
    <property type="entry name" value="Holliday junction ATP-dependent DNA helicase RuvB"/>
    <property type="match status" value="1"/>
</dbReference>
<dbReference type="FunFam" id="1.10.8.60:FF:000023">
    <property type="entry name" value="Holliday junction ATP-dependent DNA helicase RuvB"/>
    <property type="match status" value="1"/>
</dbReference>
<dbReference type="FunFam" id="3.40.50.300:FF:000073">
    <property type="entry name" value="Holliday junction ATP-dependent DNA helicase RuvB"/>
    <property type="match status" value="1"/>
</dbReference>
<dbReference type="Gene3D" id="1.10.8.60">
    <property type="match status" value="1"/>
</dbReference>
<dbReference type="Gene3D" id="3.40.50.300">
    <property type="entry name" value="P-loop containing nucleotide triphosphate hydrolases"/>
    <property type="match status" value="1"/>
</dbReference>
<dbReference type="Gene3D" id="1.10.10.10">
    <property type="entry name" value="Winged helix-like DNA-binding domain superfamily/Winged helix DNA-binding domain"/>
    <property type="match status" value="1"/>
</dbReference>
<dbReference type="HAMAP" id="MF_00016">
    <property type="entry name" value="DNA_HJ_migration_RuvB"/>
    <property type="match status" value="1"/>
</dbReference>
<dbReference type="InterPro" id="IPR003593">
    <property type="entry name" value="AAA+_ATPase"/>
</dbReference>
<dbReference type="InterPro" id="IPR041445">
    <property type="entry name" value="AAA_lid_4"/>
</dbReference>
<dbReference type="InterPro" id="IPR004605">
    <property type="entry name" value="DNA_helicase_Holl-junc_RuvB"/>
</dbReference>
<dbReference type="InterPro" id="IPR027417">
    <property type="entry name" value="P-loop_NTPase"/>
</dbReference>
<dbReference type="InterPro" id="IPR008824">
    <property type="entry name" value="RuvB-like_N"/>
</dbReference>
<dbReference type="InterPro" id="IPR008823">
    <property type="entry name" value="RuvB_C"/>
</dbReference>
<dbReference type="InterPro" id="IPR036388">
    <property type="entry name" value="WH-like_DNA-bd_sf"/>
</dbReference>
<dbReference type="InterPro" id="IPR036390">
    <property type="entry name" value="WH_DNA-bd_sf"/>
</dbReference>
<dbReference type="NCBIfam" id="NF000868">
    <property type="entry name" value="PRK00080.1"/>
    <property type="match status" value="1"/>
</dbReference>
<dbReference type="NCBIfam" id="TIGR00635">
    <property type="entry name" value="ruvB"/>
    <property type="match status" value="1"/>
</dbReference>
<dbReference type="PANTHER" id="PTHR42848">
    <property type="match status" value="1"/>
</dbReference>
<dbReference type="PANTHER" id="PTHR42848:SF1">
    <property type="entry name" value="HOLLIDAY JUNCTION BRANCH MIGRATION COMPLEX SUBUNIT RUVB"/>
    <property type="match status" value="1"/>
</dbReference>
<dbReference type="Pfam" id="PF17864">
    <property type="entry name" value="AAA_lid_4"/>
    <property type="match status" value="1"/>
</dbReference>
<dbReference type="Pfam" id="PF05491">
    <property type="entry name" value="RuvB_C"/>
    <property type="match status" value="1"/>
</dbReference>
<dbReference type="Pfam" id="PF05496">
    <property type="entry name" value="RuvB_N"/>
    <property type="match status" value="1"/>
</dbReference>
<dbReference type="SMART" id="SM00382">
    <property type="entry name" value="AAA"/>
    <property type="match status" value="1"/>
</dbReference>
<dbReference type="SUPFAM" id="SSF52540">
    <property type="entry name" value="P-loop containing nucleoside triphosphate hydrolases"/>
    <property type="match status" value="1"/>
</dbReference>
<dbReference type="SUPFAM" id="SSF46785">
    <property type="entry name" value="Winged helix' DNA-binding domain"/>
    <property type="match status" value="1"/>
</dbReference>
<protein>
    <recommendedName>
        <fullName evidence="1">Holliday junction branch migration complex subunit RuvB</fullName>
        <ecNumber evidence="1">3.6.4.-</ecNumber>
    </recommendedName>
</protein>
<keyword id="KW-0067">ATP-binding</keyword>
<keyword id="KW-0963">Cytoplasm</keyword>
<keyword id="KW-0227">DNA damage</keyword>
<keyword id="KW-0233">DNA recombination</keyword>
<keyword id="KW-0234">DNA repair</keyword>
<keyword id="KW-0238">DNA-binding</keyword>
<keyword id="KW-0378">Hydrolase</keyword>
<keyword id="KW-0547">Nucleotide-binding</keyword>
<sequence length="334" mass="36843">MIEADRLIQPQLQGQDDVIDRAMRPKLLDEYTGQDDTRAQLKVFIQAAKNREEALDHMLIYGPPGLGKTTLAMIVANEMGVNIKSTSGPVLEKAGDLAALLTNLEAGDVLFIDEIHRLSPVVEEILYPAMEDYQLDIMIGEGPAARSIKLDLPPFTLVGATTRAGALTSPLRARFGIPLRLEFYNVKDLSTIVTRSAQVMGLAIDSEGATEIAKRSRGTPRIANRLLRRVRDYAEVKHDGAVTKKVAEHALDLLDVDGEGFDYMDRKLLLAIIDKFMGGPVGLDNLAAAIGEERETIEDVLEPFLIQQGFIQRTPRGRIATTRAYLHFGMIKPE</sequence>
<gene>
    <name evidence="1" type="primary">ruvB</name>
    <name type="ordered locus">Shewmr4_1902</name>
</gene>
<evidence type="ECO:0000255" key="1">
    <source>
        <dbReference type="HAMAP-Rule" id="MF_00016"/>
    </source>
</evidence>
<name>RUVB_SHESM</name>
<organism>
    <name type="scientific">Shewanella sp. (strain MR-4)</name>
    <dbReference type="NCBI Taxonomy" id="60480"/>
    <lineage>
        <taxon>Bacteria</taxon>
        <taxon>Pseudomonadati</taxon>
        <taxon>Pseudomonadota</taxon>
        <taxon>Gammaproteobacteria</taxon>
        <taxon>Alteromonadales</taxon>
        <taxon>Shewanellaceae</taxon>
        <taxon>Shewanella</taxon>
    </lineage>
</organism>
<accession>Q0HIZ1</accession>
<comment type="function">
    <text evidence="1">The RuvA-RuvB-RuvC complex processes Holliday junction (HJ) DNA during genetic recombination and DNA repair, while the RuvA-RuvB complex plays an important role in the rescue of blocked DNA replication forks via replication fork reversal (RFR). RuvA specifically binds to HJ cruciform DNA, conferring on it an open structure. The RuvB hexamer acts as an ATP-dependent pump, pulling dsDNA into and through the RuvAB complex. RuvB forms 2 homohexamers on either side of HJ DNA bound by 1 or 2 RuvA tetramers; 4 subunits per hexamer contact DNA at a time. Coordinated motions by a converter formed by DNA-disengaged RuvB subunits stimulates ATP hydrolysis and nucleotide exchange. Immobilization of the converter enables RuvB to convert the ATP-contained energy into a lever motion, pulling 2 nucleotides of DNA out of the RuvA tetramer per ATP hydrolyzed, thus driving DNA branch migration. The RuvB motors rotate together with the DNA substrate, which together with the progressing nucleotide cycle form the mechanistic basis for DNA recombination by continuous HJ branch migration. Branch migration allows RuvC to scan DNA until it finds its consensus sequence, where it cleaves and resolves cruciform DNA.</text>
</comment>
<comment type="catalytic activity">
    <reaction evidence="1">
        <text>ATP + H2O = ADP + phosphate + H(+)</text>
        <dbReference type="Rhea" id="RHEA:13065"/>
        <dbReference type="ChEBI" id="CHEBI:15377"/>
        <dbReference type="ChEBI" id="CHEBI:15378"/>
        <dbReference type="ChEBI" id="CHEBI:30616"/>
        <dbReference type="ChEBI" id="CHEBI:43474"/>
        <dbReference type="ChEBI" id="CHEBI:456216"/>
    </reaction>
</comment>
<comment type="subunit">
    <text evidence="1">Homohexamer. Forms an RuvA(8)-RuvB(12)-Holliday junction (HJ) complex. HJ DNA is sandwiched between 2 RuvA tetramers; dsDNA enters through RuvA and exits via RuvB. An RuvB hexamer assembles on each DNA strand where it exits the tetramer. Each RuvB hexamer is contacted by two RuvA subunits (via domain III) on 2 adjacent RuvB subunits; this complex drives branch migration. In the full resolvosome a probable DNA-RuvA(4)-RuvB(12)-RuvC(2) complex forms which resolves the HJ.</text>
</comment>
<comment type="subcellular location">
    <subcellularLocation>
        <location evidence="1">Cytoplasm</location>
    </subcellularLocation>
</comment>
<comment type="domain">
    <text evidence="1">Has 3 domains, the large (RuvB-L) and small ATPase (RuvB-S) domains and the C-terminal head (RuvB-H) domain. The head domain binds DNA, while the ATPase domains jointly bind ATP, ADP or are empty depending on the state of the subunit in the translocation cycle. During a single DNA translocation step the structure of each domain remains the same, but their relative positions change.</text>
</comment>
<comment type="similarity">
    <text evidence="1">Belongs to the RuvB family.</text>
</comment>
<feature type="chain" id="PRO_1000001477" description="Holliday junction branch migration complex subunit RuvB">
    <location>
        <begin position="1"/>
        <end position="334"/>
    </location>
</feature>
<feature type="region of interest" description="Large ATPase domain (RuvB-L)" evidence="1">
    <location>
        <begin position="4"/>
        <end position="184"/>
    </location>
</feature>
<feature type="region of interest" description="Small ATPAse domain (RuvB-S)" evidence="1">
    <location>
        <begin position="185"/>
        <end position="255"/>
    </location>
</feature>
<feature type="region of interest" description="Head domain (RuvB-H)" evidence="1">
    <location>
        <begin position="258"/>
        <end position="334"/>
    </location>
</feature>
<feature type="binding site" evidence="1">
    <location>
        <position position="24"/>
    </location>
    <ligand>
        <name>ATP</name>
        <dbReference type="ChEBI" id="CHEBI:30616"/>
    </ligand>
</feature>
<feature type="binding site" evidence="1">
    <location>
        <position position="65"/>
    </location>
    <ligand>
        <name>ATP</name>
        <dbReference type="ChEBI" id="CHEBI:30616"/>
    </ligand>
</feature>
<feature type="binding site" evidence="1">
    <location>
        <position position="68"/>
    </location>
    <ligand>
        <name>ATP</name>
        <dbReference type="ChEBI" id="CHEBI:30616"/>
    </ligand>
</feature>
<feature type="binding site" evidence="1">
    <location>
        <position position="69"/>
    </location>
    <ligand>
        <name>ATP</name>
        <dbReference type="ChEBI" id="CHEBI:30616"/>
    </ligand>
</feature>
<feature type="binding site" evidence="1">
    <location>
        <position position="69"/>
    </location>
    <ligand>
        <name>Mg(2+)</name>
        <dbReference type="ChEBI" id="CHEBI:18420"/>
    </ligand>
</feature>
<feature type="binding site" evidence="1">
    <location>
        <position position="70"/>
    </location>
    <ligand>
        <name>ATP</name>
        <dbReference type="ChEBI" id="CHEBI:30616"/>
    </ligand>
</feature>
<feature type="binding site" evidence="1">
    <location>
        <begin position="131"/>
        <end position="133"/>
    </location>
    <ligand>
        <name>ATP</name>
        <dbReference type="ChEBI" id="CHEBI:30616"/>
    </ligand>
</feature>
<feature type="binding site" evidence="1">
    <location>
        <position position="174"/>
    </location>
    <ligand>
        <name>ATP</name>
        <dbReference type="ChEBI" id="CHEBI:30616"/>
    </ligand>
</feature>
<feature type="binding site" evidence="1">
    <location>
        <position position="184"/>
    </location>
    <ligand>
        <name>ATP</name>
        <dbReference type="ChEBI" id="CHEBI:30616"/>
    </ligand>
</feature>
<feature type="binding site" evidence="1">
    <location>
        <position position="221"/>
    </location>
    <ligand>
        <name>ATP</name>
        <dbReference type="ChEBI" id="CHEBI:30616"/>
    </ligand>
</feature>
<feature type="binding site" evidence="1">
    <location>
        <position position="294"/>
    </location>
    <ligand>
        <name>DNA</name>
        <dbReference type="ChEBI" id="CHEBI:16991"/>
    </ligand>
</feature>
<feature type="binding site" evidence="1">
    <location>
        <position position="313"/>
    </location>
    <ligand>
        <name>DNA</name>
        <dbReference type="ChEBI" id="CHEBI:16991"/>
    </ligand>
</feature>
<feature type="binding site" evidence="1">
    <location>
        <position position="318"/>
    </location>
    <ligand>
        <name>DNA</name>
        <dbReference type="ChEBI" id="CHEBI:16991"/>
    </ligand>
</feature>
<reference key="1">
    <citation type="submission" date="2006-08" db="EMBL/GenBank/DDBJ databases">
        <title>Complete sequence of Shewanella sp. MR-4.</title>
        <authorList>
            <consortium name="US DOE Joint Genome Institute"/>
            <person name="Copeland A."/>
            <person name="Lucas S."/>
            <person name="Lapidus A."/>
            <person name="Barry K."/>
            <person name="Detter J.C."/>
            <person name="Glavina del Rio T."/>
            <person name="Hammon N."/>
            <person name="Israni S."/>
            <person name="Dalin E."/>
            <person name="Tice H."/>
            <person name="Pitluck S."/>
            <person name="Kiss H."/>
            <person name="Brettin T."/>
            <person name="Bruce D."/>
            <person name="Han C."/>
            <person name="Tapia R."/>
            <person name="Gilna P."/>
            <person name="Schmutz J."/>
            <person name="Larimer F."/>
            <person name="Land M."/>
            <person name="Hauser L."/>
            <person name="Kyrpides N."/>
            <person name="Mikhailova N."/>
            <person name="Nealson K."/>
            <person name="Konstantinidis K."/>
            <person name="Klappenbach J."/>
            <person name="Tiedje J."/>
            <person name="Richardson P."/>
        </authorList>
    </citation>
    <scope>NUCLEOTIDE SEQUENCE [LARGE SCALE GENOMIC DNA]</scope>
    <source>
        <strain>MR-4</strain>
    </source>
</reference>
<proteinExistence type="inferred from homology"/>